<keyword id="KW-0238">DNA-binding</keyword>
<keyword id="KW-1185">Reference proteome</keyword>
<keyword id="KW-0804">Transcription</keyword>
<keyword id="KW-0805">Transcription regulation</keyword>
<protein>
    <recommendedName>
        <fullName>Uncharacterized HTH-type transcriptional regulator Rv1830</fullName>
    </recommendedName>
</protein>
<sequence>MTQLVTRARSARGSTLGEQPRQDQLDFADHTGTAGDGNDGAAAASGPVQPGLFPDDSVPDELVGYRGPSACQIAGITYRQLDYWARTSLVVPSIRSAAGSGSQRLYSFKDILVLKIVKRLLDTGISLHNIRVAVDHLRQRGVQDLANITLFSDGTTVYECTSAEEVVDLLQGGQGVFGIAVSGAMRELTGVIADFHGERADGGESIAAPEDELASRRKHRDRKIG</sequence>
<accession>P9WME5</accession>
<accession>L0T9D7</accession>
<accession>P67671</accession>
<accession>Q50603</accession>
<organism>
    <name type="scientific">Mycobacterium tuberculosis (strain ATCC 25618 / H37Rv)</name>
    <dbReference type="NCBI Taxonomy" id="83332"/>
    <lineage>
        <taxon>Bacteria</taxon>
        <taxon>Bacillati</taxon>
        <taxon>Actinomycetota</taxon>
        <taxon>Actinomycetes</taxon>
        <taxon>Mycobacteriales</taxon>
        <taxon>Mycobacteriaceae</taxon>
        <taxon>Mycobacterium</taxon>
        <taxon>Mycobacterium tuberculosis complex</taxon>
    </lineage>
</organism>
<reference key="1">
    <citation type="journal article" date="1998" name="Nature">
        <title>Deciphering the biology of Mycobacterium tuberculosis from the complete genome sequence.</title>
        <authorList>
            <person name="Cole S.T."/>
            <person name="Brosch R."/>
            <person name="Parkhill J."/>
            <person name="Garnier T."/>
            <person name="Churcher C.M."/>
            <person name="Harris D.E."/>
            <person name="Gordon S.V."/>
            <person name="Eiglmeier K."/>
            <person name="Gas S."/>
            <person name="Barry C.E. III"/>
            <person name="Tekaia F."/>
            <person name="Badcock K."/>
            <person name="Basham D."/>
            <person name="Brown D."/>
            <person name="Chillingworth T."/>
            <person name="Connor R."/>
            <person name="Davies R.M."/>
            <person name="Devlin K."/>
            <person name="Feltwell T."/>
            <person name="Gentles S."/>
            <person name="Hamlin N."/>
            <person name="Holroyd S."/>
            <person name="Hornsby T."/>
            <person name="Jagels K."/>
            <person name="Krogh A."/>
            <person name="McLean J."/>
            <person name="Moule S."/>
            <person name="Murphy L.D."/>
            <person name="Oliver S."/>
            <person name="Osborne J."/>
            <person name="Quail M.A."/>
            <person name="Rajandream M.A."/>
            <person name="Rogers J."/>
            <person name="Rutter S."/>
            <person name="Seeger K."/>
            <person name="Skelton S."/>
            <person name="Squares S."/>
            <person name="Squares R."/>
            <person name="Sulston J.E."/>
            <person name="Taylor K."/>
            <person name="Whitehead S."/>
            <person name="Barrell B.G."/>
        </authorList>
    </citation>
    <scope>NUCLEOTIDE SEQUENCE [LARGE SCALE GENOMIC DNA]</scope>
    <source>
        <strain>ATCC 25618 / H37Rv</strain>
    </source>
</reference>
<reference key="2">
    <citation type="journal article" date="2011" name="Mol. Cell. Proteomics">
        <title>Proteogenomic analysis of Mycobacterium tuberculosis by high resolution mass spectrometry.</title>
        <authorList>
            <person name="Kelkar D.S."/>
            <person name="Kumar D."/>
            <person name="Kumar P."/>
            <person name="Balakrishnan L."/>
            <person name="Muthusamy B."/>
            <person name="Yadav A.K."/>
            <person name="Shrivastava P."/>
            <person name="Marimuthu A."/>
            <person name="Anand S."/>
            <person name="Sundaram H."/>
            <person name="Kingsbury R."/>
            <person name="Harsha H.C."/>
            <person name="Nair B."/>
            <person name="Prasad T.S."/>
            <person name="Chauhan D.S."/>
            <person name="Katoch K."/>
            <person name="Katoch V.M."/>
            <person name="Kumar P."/>
            <person name="Chaerkady R."/>
            <person name="Ramachandran S."/>
            <person name="Dash D."/>
            <person name="Pandey A."/>
        </authorList>
    </citation>
    <scope>IDENTIFICATION BY MASS SPECTROMETRY [LARGE SCALE ANALYSIS]</scope>
    <source>
        <strain>ATCC 25618 / H37Rv</strain>
    </source>
</reference>
<proteinExistence type="evidence at protein level"/>
<name>Y1830_MYCTU</name>
<feature type="chain" id="PRO_0000098170" description="Uncharacterized HTH-type transcriptional regulator Rv1830">
    <location>
        <begin position="1"/>
        <end position="225"/>
    </location>
</feature>
<feature type="domain" description="HTH merR-type" evidence="1">
    <location>
        <begin position="64"/>
        <end position="136"/>
    </location>
</feature>
<feature type="region of interest" description="Disordered" evidence="2">
    <location>
        <begin position="1"/>
        <end position="48"/>
    </location>
</feature>
<feature type="region of interest" description="Disordered" evidence="2">
    <location>
        <begin position="201"/>
        <end position="225"/>
    </location>
</feature>
<feature type="compositionally biased region" description="Basic and acidic residues" evidence="2">
    <location>
        <begin position="20"/>
        <end position="29"/>
    </location>
</feature>
<feature type="compositionally biased region" description="Basic residues" evidence="2">
    <location>
        <begin position="216"/>
        <end position="225"/>
    </location>
</feature>
<dbReference type="EMBL" id="AL123456">
    <property type="protein sequence ID" value="CCP44596.1"/>
    <property type="molecule type" value="Genomic_DNA"/>
</dbReference>
<dbReference type="PIR" id="G70721">
    <property type="entry name" value="G70721"/>
</dbReference>
<dbReference type="RefSeq" id="NP_216346.1">
    <property type="nucleotide sequence ID" value="NC_000962.3"/>
</dbReference>
<dbReference type="RefSeq" id="WP_003409244.1">
    <property type="nucleotide sequence ID" value="NC_000962.3"/>
</dbReference>
<dbReference type="SMR" id="P9WME5"/>
<dbReference type="STRING" id="83332.Rv1830"/>
<dbReference type="PaxDb" id="83332-Rv1830"/>
<dbReference type="DNASU" id="885740"/>
<dbReference type="GeneID" id="885740"/>
<dbReference type="KEGG" id="mtu:Rv1830"/>
<dbReference type="KEGG" id="mtv:RVBD_1830"/>
<dbReference type="PATRIC" id="fig|83332.111.peg.2036"/>
<dbReference type="TubercuList" id="Rv1830"/>
<dbReference type="eggNOG" id="COG0789">
    <property type="taxonomic scope" value="Bacteria"/>
</dbReference>
<dbReference type="InParanoid" id="P9WME5"/>
<dbReference type="OrthoDB" id="7410529at2"/>
<dbReference type="PhylomeDB" id="P9WME5"/>
<dbReference type="Proteomes" id="UP000001584">
    <property type="component" value="Chromosome"/>
</dbReference>
<dbReference type="GO" id="GO:0003677">
    <property type="term" value="F:DNA binding"/>
    <property type="evidence" value="ECO:0007669"/>
    <property type="project" value="UniProtKB-KW"/>
</dbReference>
<dbReference type="GO" id="GO:0003700">
    <property type="term" value="F:DNA-binding transcription factor activity"/>
    <property type="evidence" value="ECO:0000318"/>
    <property type="project" value="GO_Central"/>
</dbReference>
<dbReference type="GO" id="GO:0045892">
    <property type="term" value="P:negative regulation of DNA-templated transcription"/>
    <property type="evidence" value="ECO:0000318"/>
    <property type="project" value="GO_Central"/>
</dbReference>
<dbReference type="CDD" id="cd01105">
    <property type="entry name" value="HTH_GlnR-like"/>
    <property type="match status" value="1"/>
</dbReference>
<dbReference type="Gene3D" id="1.10.1660.10">
    <property type="match status" value="1"/>
</dbReference>
<dbReference type="InterPro" id="IPR009061">
    <property type="entry name" value="DNA-bd_dom_put_sf"/>
</dbReference>
<dbReference type="InterPro" id="IPR000551">
    <property type="entry name" value="MerR-type_HTH_dom"/>
</dbReference>
<dbReference type="InterPro" id="IPR047057">
    <property type="entry name" value="MerR_fam"/>
</dbReference>
<dbReference type="PANTHER" id="PTHR30204:SF3">
    <property type="entry name" value="HTH MERR-TYPE DOMAIN-CONTAINING PROTEIN"/>
    <property type="match status" value="1"/>
</dbReference>
<dbReference type="PANTHER" id="PTHR30204">
    <property type="entry name" value="REDOX-CYCLING DRUG-SENSING TRANSCRIPTIONAL ACTIVATOR SOXR"/>
    <property type="match status" value="1"/>
</dbReference>
<dbReference type="Pfam" id="PF13411">
    <property type="entry name" value="MerR_1"/>
    <property type="match status" value="1"/>
</dbReference>
<dbReference type="SMART" id="SM00422">
    <property type="entry name" value="HTH_MERR"/>
    <property type="match status" value="1"/>
</dbReference>
<dbReference type="SUPFAM" id="SSF46955">
    <property type="entry name" value="Putative DNA-binding domain"/>
    <property type="match status" value="1"/>
</dbReference>
<dbReference type="PROSITE" id="PS50937">
    <property type="entry name" value="HTH_MERR_2"/>
    <property type="match status" value="1"/>
</dbReference>
<gene>
    <name type="ordered locus">Rv1830</name>
    <name type="ORF">MTCY1A11.13c</name>
</gene>
<evidence type="ECO:0000255" key="1">
    <source>
        <dbReference type="PROSITE-ProRule" id="PRU00254"/>
    </source>
</evidence>
<evidence type="ECO:0000256" key="2">
    <source>
        <dbReference type="SAM" id="MobiDB-lite"/>
    </source>
</evidence>